<feature type="chain" id="PRO_0000187282" description="Putative RNA-binding protein Luc7-like 2">
    <location>
        <begin position="1"/>
        <end position="392"/>
    </location>
</feature>
<feature type="region of interest" description="Disordered" evidence="3">
    <location>
        <begin position="235"/>
        <end position="392"/>
    </location>
</feature>
<feature type="coiled-coil region" evidence="2">
    <location>
        <begin position="102"/>
        <end position="177"/>
    </location>
</feature>
<feature type="compositionally biased region" description="Basic and acidic residues" evidence="3">
    <location>
        <begin position="235"/>
        <end position="257"/>
    </location>
</feature>
<feature type="compositionally biased region" description="Basic residues" evidence="3">
    <location>
        <begin position="258"/>
        <end position="321"/>
    </location>
</feature>
<feature type="compositionally biased region" description="Basic and acidic residues" evidence="3">
    <location>
        <begin position="337"/>
        <end position="364"/>
    </location>
</feature>
<feature type="compositionally biased region" description="Basic and acidic residues" evidence="3">
    <location>
        <begin position="377"/>
        <end position="392"/>
    </location>
</feature>
<feature type="modified residue" description="Phosphoserine" evidence="8 9 10 11">
    <location>
        <position position="18"/>
    </location>
</feature>
<feature type="modified residue" description="5-hydroxylysine; by JMJD6" evidence="4">
    <location>
        <position position="266"/>
    </location>
</feature>
<feature type="modified residue" description="5-hydroxylysine; by JMJD6" evidence="4">
    <location>
        <position position="269"/>
    </location>
</feature>
<feature type="splice variant" id="VSP_010217" description="In isoform 2." evidence="6">
    <original>MSAQAQMRAMLDQLMGTSRDG</original>
    <variation>MPAYLNLQGSVRKAPHSPSR</variation>
    <location>
        <begin position="1"/>
        <end position="21"/>
    </location>
</feature>
<feature type="splice variant" id="VSP_044896" description="In isoform 3." evidence="5">
    <original>MSAQAQMRAMLDQLMGTSRD</original>
    <variation>MVIHSQLKKIQGASERM</variation>
    <location>
        <begin position="1"/>
        <end position="20"/>
    </location>
</feature>
<feature type="sequence variant" id="VAR_034067" description="In dbSNP:rs3757435.">
    <original>D</original>
    <variation>E</variation>
    <location>
        <position position="361"/>
    </location>
</feature>
<feature type="mutagenesis site" description="Induces a decrease in lysyl-hydroxylation. Abolishes lysyl-hydroxylation; when associated with R-269." evidence="4">
    <original>K</original>
    <variation>R</variation>
    <location>
        <position position="266"/>
    </location>
</feature>
<feature type="mutagenesis site" description="Induces a decrease in lysyl-hydroxylation. Abolishes lysyl-hydroxylation; when associated with R-266." evidence="4">
    <original>K</original>
    <variation>R</variation>
    <location>
        <position position="269"/>
    </location>
</feature>
<feature type="sequence conflict" description="In Ref. 2; BAA91737." evidence="7" ref="2">
    <original>R</original>
    <variation>Q</variation>
    <location>
        <position position="27"/>
    </location>
</feature>
<feature type="sequence conflict" description="In Ref. 1; AAD34054." evidence="7" ref="1">
    <original>AG</original>
    <variation>QR</variation>
    <location>
        <begin position="389"/>
        <end position="390"/>
    </location>
</feature>
<protein>
    <recommendedName>
        <fullName>Putative RNA-binding protein Luc7-like 2</fullName>
    </recommendedName>
</protein>
<name>LC7L2_HUMAN</name>
<gene>
    <name type="primary">LUC7L2</name>
    <name type="ORF">CGI-59</name>
    <name type="ORF">CGI-74</name>
</gene>
<dbReference type="EMBL" id="AF151817">
    <property type="protein sequence ID" value="AAD34054.1"/>
    <property type="molecule type" value="mRNA"/>
</dbReference>
<dbReference type="EMBL" id="AF151832">
    <property type="protein sequence ID" value="AAD34069.1"/>
    <property type="status" value="ALT_FRAME"/>
    <property type="molecule type" value="mRNA"/>
</dbReference>
<dbReference type="EMBL" id="AK001476">
    <property type="protein sequence ID" value="BAA91713.1"/>
    <property type="molecule type" value="mRNA"/>
</dbReference>
<dbReference type="EMBL" id="AK001519">
    <property type="protein sequence ID" value="BAA91737.1"/>
    <property type="molecule type" value="mRNA"/>
</dbReference>
<dbReference type="EMBL" id="AK022895">
    <property type="protein sequence ID" value="BAB14297.1"/>
    <property type="molecule type" value="mRNA"/>
</dbReference>
<dbReference type="EMBL" id="AK298166">
    <property type="protein sequence ID" value="BAH12736.1"/>
    <property type="molecule type" value="mRNA"/>
</dbReference>
<dbReference type="EMBL" id="BC017163">
    <property type="protein sequence ID" value="AAH17163.1"/>
    <property type="molecule type" value="mRNA"/>
</dbReference>
<dbReference type="EMBL" id="BC042625">
    <property type="protein sequence ID" value="AAH42625.1"/>
    <property type="molecule type" value="mRNA"/>
</dbReference>
<dbReference type="EMBL" id="BC050708">
    <property type="protein sequence ID" value="AAH50708.1"/>
    <property type="molecule type" value="mRNA"/>
</dbReference>
<dbReference type="EMBL" id="BC056886">
    <property type="protein sequence ID" value="AAH56886.1"/>
    <property type="molecule type" value="mRNA"/>
</dbReference>
<dbReference type="CCDS" id="CCDS43656.1">
    <molecule id="Q9Y383-1"/>
</dbReference>
<dbReference type="CCDS" id="CCDS59085.1">
    <molecule id="Q9Y383-3"/>
</dbReference>
<dbReference type="CCDS" id="CCDS59510.1">
    <molecule id="Q9Y383-2"/>
</dbReference>
<dbReference type="RefSeq" id="NP_001231514.1">
    <molecule id="Q9Y383-3"/>
    <property type="nucleotide sequence ID" value="NM_001244585.2"/>
</dbReference>
<dbReference type="RefSeq" id="NP_001257572.1">
    <molecule id="Q9Y383-2"/>
    <property type="nucleotide sequence ID" value="NM_001270643.2"/>
</dbReference>
<dbReference type="RefSeq" id="NP_057103.2">
    <molecule id="Q9Y383-1"/>
    <property type="nucleotide sequence ID" value="NM_016019.5"/>
</dbReference>
<dbReference type="SMR" id="Q9Y383"/>
<dbReference type="BioGRID" id="119646">
    <property type="interactions" value="367"/>
</dbReference>
<dbReference type="CORUM" id="Q9Y383"/>
<dbReference type="DIP" id="DIP-32513N"/>
<dbReference type="FunCoup" id="Q9Y383">
    <property type="interactions" value="2874"/>
</dbReference>
<dbReference type="IntAct" id="Q9Y383">
    <property type="interactions" value="159"/>
</dbReference>
<dbReference type="MINT" id="Q9Y383"/>
<dbReference type="STRING" id="9606.ENSP00000347005"/>
<dbReference type="GlyGen" id="Q9Y383">
    <property type="glycosylation" value="1 site, 1 O-linked glycan (1 site)"/>
</dbReference>
<dbReference type="iPTMnet" id="Q9Y383"/>
<dbReference type="MetOSite" id="Q9Y383"/>
<dbReference type="PhosphoSitePlus" id="Q9Y383"/>
<dbReference type="SwissPalm" id="Q9Y383"/>
<dbReference type="BioMuta" id="LUC7L2"/>
<dbReference type="DMDM" id="47116960"/>
<dbReference type="jPOST" id="Q9Y383"/>
<dbReference type="MassIVE" id="Q9Y383"/>
<dbReference type="PaxDb" id="9606-ENSP00000347005"/>
<dbReference type="PeptideAtlas" id="Q9Y383"/>
<dbReference type="ProteomicsDB" id="6647"/>
<dbReference type="ProteomicsDB" id="85982">
    <molecule id="Q9Y383-1"/>
</dbReference>
<dbReference type="ProteomicsDB" id="85983">
    <molecule id="Q9Y383-2"/>
</dbReference>
<dbReference type="Pumba" id="Q9Y383"/>
<dbReference type="Antibodypedia" id="53629">
    <property type="antibodies" value="136 antibodies from 26 providers"/>
</dbReference>
<dbReference type="DNASU" id="51631"/>
<dbReference type="Ensembl" id="ENST00000263545.7">
    <molecule id="Q9Y383-3"/>
    <property type="protein sequence ID" value="ENSP00000263545.7"/>
    <property type="gene ID" value="ENSG00000146963.18"/>
</dbReference>
<dbReference type="Ensembl" id="ENST00000354926.9">
    <molecule id="Q9Y383-1"/>
    <property type="protein sequence ID" value="ENSP00000347005.4"/>
    <property type="gene ID" value="ENSG00000146963.18"/>
</dbReference>
<dbReference type="Ensembl" id="ENST00000541170.7">
    <molecule id="Q9Y383-3"/>
    <property type="protein sequence ID" value="ENSP00000441604.1"/>
    <property type="gene ID" value="ENSG00000146963.18"/>
</dbReference>
<dbReference type="Ensembl" id="ENST00000619796.4">
    <molecule id="Q9Y383-2"/>
    <property type="protein sequence ID" value="ENSP00000483438.1"/>
    <property type="gene ID" value="ENSG00000146963.18"/>
</dbReference>
<dbReference type="GeneID" id="51631"/>
<dbReference type="KEGG" id="hsa:51631"/>
<dbReference type="MANE-Select" id="ENST00000354926.9">
    <property type="protein sequence ID" value="ENSP00000347005.4"/>
    <property type="RefSeq nucleotide sequence ID" value="NM_016019.5"/>
    <property type="RefSeq protein sequence ID" value="NP_057103.2"/>
</dbReference>
<dbReference type="UCSC" id="uc003vux.5">
    <molecule id="Q9Y383-1"/>
    <property type="organism name" value="human"/>
</dbReference>
<dbReference type="AGR" id="HGNC:21608"/>
<dbReference type="CTD" id="51631"/>
<dbReference type="DisGeNET" id="51631"/>
<dbReference type="GeneCards" id="LUC7L2"/>
<dbReference type="HGNC" id="HGNC:21608">
    <property type="gene designation" value="LUC7L2"/>
</dbReference>
<dbReference type="HPA" id="ENSG00000146963">
    <property type="expression patterns" value="Low tissue specificity"/>
</dbReference>
<dbReference type="MalaCards" id="LUC7L2"/>
<dbReference type="MIM" id="613056">
    <property type="type" value="gene"/>
</dbReference>
<dbReference type="neXtProt" id="NX_Q9Y383"/>
<dbReference type="OpenTargets" id="ENSG00000146963"/>
<dbReference type="PharmGKB" id="PA134873425"/>
<dbReference type="VEuPathDB" id="HostDB:ENSG00000146963"/>
<dbReference type="eggNOG" id="KOG0796">
    <property type="taxonomic scope" value="Eukaryota"/>
</dbReference>
<dbReference type="GeneTree" id="ENSGT00950000183213"/>
<dbReference type="HOGENOM" id="CLU_030397_3_0_1"/>
<dbReference type="InParanoid" id="Q9Y383"/>
<dbReference type="OMA" id="CPHELFP"/>
<dbReference type="OrthoDB" id="153872at2759"/>
<dbReference type="PAN-GO" id="Q9Y383">
    <property type="GO annotations" value="4 GO annotations based on evolutionary models"/>
</dbReference>
<dbReference type="PhylomeDB" id="Q9Y383"/>
<dbReference type="TreeFam" id="TF317607"/>
<dbReference type="PathwayCommons" id="Q9Y383"/>
<dbReference type="SignaLink" id="Q9Y383"/>
<dbReference type="BioGRID-ORCS" id="51631">
    <property type="hits" value="103 hits in 1089 CRISPR screens"/>
</dbReference>
<dbReference type="CD-CODE" id="804901D1">
    <property type="entry name" value="Nuclear speckle"/>
</dbReference>
<dbReference type="CD-CODE" id="91857CE7">
    <property type="entry name" value="Nucleolus"/>
</dbReference>
<dbReference type="ChiTaRS" id="LUC7L2">
    <property type="organism name" value="human"/>
</dbReference>
<dbReference type="GeneWiki" id="LUC7L2"/>
<dbReference type="GenomeRNAi" id="51631"/>
<dbReference type="Pharos" id="Q9Y383">
    <property type="development level" value="Tbio"/>
</dbReference>
<dbReference type="PRO" id="PR:Q9Y383"/>
<dbReference type="Proteomes" id="UP000005640">
    <property type="component" value="Chromosome 7"/>
</dbReference>
<dbReference type="RNAct" id="Q9Y383">
    <property type="molecule type" value="protein"/>
</dbReference>
<dbReference type="Bgee" id="ENSG00000146963">
    <property type="expression patterns" value="Expressed in sural nerve and 191 other cell types or tissues"/>
</dbReference>
<dbReference type="ExpressionAtlas" id="Q9Y383">
    <property type="expression patterns" value="baseline and differential"/>
</dbReference>
<dbReference type="GO" id="GO:0016607">
    <property type="term" value="C:nuclear speck"/>
    <property type="evidence" value="ECO:0000250"/>
    <property type="project" value="UniProtKB"/>
</dbReference>
<dbReference type="GO" id="GO:0005685">
    <property type="term" value="C:U1 snRNP"/>
    <property type="evidence" value="ECO:0000318"/>
    <property type="project" value="GO_Central"/>
</dbReference>
<dbReference type="GO" id="GO:0071004">
    <property type="term" value="C:U2-type prespliceosome"/>
    <property type="evidence" value="ECO:0000318"/>
    <property type="project" value="GO_Central"/>
</dbReference>
<dbReference type="GO" id="GO:0019899">
    <property type="term" value="F:enzyme binding"/>
    <property type="evidence" value="ECO:0000353"/>
    <property type="project" value="UniProtKB"/>
</dbReference>
<dbReference type="GO" id="GO:0003729">
    <property type="term" value="F:mRNA binding"/>
    <property type="evidence" value="ECO:0000318"/>
    <property type="project" value="GO_Central"/>
</dbReference>
<dbReference type="GO" id="GO:0003723">
    <property type="term" value="F:RNA binding"/>
    <property type="evidence" value="ECO:0007005"/>
    <property type="project" value="UniProtKB"/>
</dbReference>
<dbReference type="GO" id="GO:0006376">
    <property type="term" value="P:mRNA splice site recognition"/>
    <property type="evidence" value="ECO:0000318"/>
    <property type="project" value="GO_Central"/>
</dbReference>
<dbReference type="InterPro" id="IPR004882">
    <property type="entry name" value="Luc7-rel"/>
</dbReference>
<dbReference type="PANTHER" id="PTHR12375">
    <property type="entry name" value="RNA-BINDING PROTEIN LUC7-RELATED"/>
    <property type="match status" value="1"/>
</dbReference>
<dbReference type="Pfam" id="PF03194">
    <property type="entry name" value="LUC7"/>
    <property type="match status" value="1"/>
</dbReference>
<accession>Q9Y383</accession>
<accession>B7Z500</accession>
<accession>Q8IUP9</accession>
<accession>Q9NVL3</accession>
<accession>Q9NVN7</accession>
<accession>Q9UQN1</accession>
<proteinExistence type="evidence at protein level"/>
<reference key="1">
    <citation type="journal article" date="2000" name="Genome Res.">
        <title>Identification of novel human genes evolutionarily conserved in Caenorhabditis elegans by comparative proteomics.</title>
        <authorList>
            <person name="Lai C.-H."/>
            <person name="Chou C.-Y."/>
            <person name="Ch'ang L.-Y."/>
            <person name="Liu C.-S."/>
            <person name="Lin W.-C."/>
        </authorList>
    </citation>
    <scope>NUCLEOTIDE SEQUENCE [LARGE SCALE MRNA] (ISOFORM 1)</scope>
</reference>
<reference key="2">
    <citation type="journal article" date="2004" name="Nat. Genet.">
        <title>Complete sequencing and characterization of 21,243 full-length human cDNAs.</title>
        <authorList>
            <person name="Ota T."/>
            <person name="Suzuki Y."/>
            <person name="Nishikawa T."/>
            <person name="Otsuki T."/>
            <person name="Sugiyama T."/>
            <person name="Irie R."/>
            <person name="Wakamatsu A."/>
            <person name="Hayashi K."/>
            <person name="Sato H."/>
            <person name="Nagai K."/>
            <person name="Kimura K."/>
            <person name="Makita H."/>
            <person name="Sekine M."/>
            <person name="Obayashi M."/>
            <person name="Nishi T."/>
            <person name="Shibahara T."/>
            <person name="Tanaka T."/>
            <person name="Ishii S."/>
            <person name="Yamamoto J."/>
            <person name="Saito K."/>
            <person name="Kawai Y."/>
            <person name="Isono Y."/>
            <person name="Nakamura Y."/>
            <person name="Nagahari K."/>
            <person name="Murakami K."/>
            <person name="Yasuda T."/>
            <person name="Iwayanagi T."/>
            <person name="Wagatsuma M."/>
            <person name="Shiratori A."/>
            <person name="Sudo H."/>
            <person name="Hosoiri T."/>
            <person name="Kaku Y."/>
            <person name="Kodaira H."/>
            <person name="Kondo H."/>
            <person name="Sugawara M."/>
            <person name="Takahashi M."/>
            <person name="Kanda K."/>
            <person name="Yokoi T."/>
            <person name="Furuya T."/>
            <person name="Kikkawa E."/>
            <person name="Omura Y."/>
            <person name="Abe K."/>
            <person name="Kamihara K."/>
            <person name="Katsuta N."/>
            <person name="Sato K."/>
            <person name="Tanikawa M."/>
            <person name="Yamazaki M."/>
            <person name="Ninomiya K."/>
            <person name="Ishibashi T."/>
            <person name="Yamashita H."/>
            <person name="Murakawa K."/>
            <person name="Fujimori K."/>
            <person name="Tanai H."/>
            <person name="Kimata M."/>
            <person name="Watanabe M."/>
            <person name="Hiraoka S."/>
            <person name="Chiba Y."/>
            <person name="Ishida S."/>
            <person name="Ono Y."/>
            <person name="Takiguchi S."/>
            <person name="Watanabe S."/>
            <person name="Yosida M."/>
            <person name="Hotuta T."/>
            <person name="Kusano J."/>
            <person name="Kanehori K."/>
            <person name="Takahashi-Fujii A."/>
            <person name="Hara H."/>
            <person name="Tanase T.-O."/>
            <person name="Nomura Y."/>
            <person name="Togiya S."/>
            <person name="Komai F."/>
            <person name="Hara R."/>
            <person name="Takeuchi K."/>
            <person name="Arita M."/>
            <person name="Imose N."/>
            <person name="Musashino K."/>
            <person name="Yuuki H."/>
            <person name="Oshima A."/>
            <person name="Sasaki N."/>
            <person name="Aotsuka S."/>
            <person name="Yoshikawa Y."/>
            <person name="Matsunawa H."/>
            <person name="Ichihara T."/>
            <person name="Shiohata N."/>
            <person name="Sano S."/>
            <person name="Moriya S."/>
            <person name="Momiyama H."/>
            <person name="Satoh N."/>
            <person name="Takami S."/>
            <person name="Terashima Y."/>
            <person name="Suzuki O."/>
            <person name="Nakagawa S."/>
            <person name="Senoh A."/>
            <person name="Mizoguchi H."/>
            <person name="Goto Y."/>
            <person name="Shimizu F."/>
            <person name="Wakebe H."/>
            <person name="Hishigaki H."/>
            <person name="Watanabe T."/>
            <person name="Sugiyama A."/>
            <person name="Takemoto M."/>
            <person name="Kawakami B."/>
            <person name="Yamazaki M."/>
            <person name="Watanabe K."/>
            <person name="Kumagai A."/>
            <person name="Itakura S."/>
            <person name="Fukuzumi Y."/>
            <person name="Fujimori Y."/>
            <person name="Komiyama M."/>
            <person name="Tashiro H."/>
            <person name="Tanigami A."/>
            <person name="Fujiwara T."/>
            <person name="Ono T."/>
            <person name="Yamada K."/>
            <person name="Fujii Y."/>
            <person name="Ozaki K."/>
            <person name="Hirao M."/>
            <person name="Ohmori Y."/>
            <person name="Kawabata A."/>
            <person name="Hikiji T."/>
            <person name="Kobatake N."/>
            <person name="Inagaki H."/>
            <person name="Ikema Y."/>
            <person name="Okamoto S."/>
            <person name="Okitani R."/>
            <person name="Kawakami T."/>
            <person name="Noguchi S."/>
            <person name="Itoh T."/>
            <person name="Shigeta K."/>
            <person name="Senba T."/>
            <person name="Matsumura K."/>
            <person name="Nakajima Y."/>
            <person name="Mizuno T."/>
            <person name="Morinaga M."/>
            <person name="Sasaki M."/>
            <person name="Togashi T."/>
            <person name="Oyama M."/>
            <person name="Hata H."/>
            <person name="Watanabe M."/>
            <person name="Komatsu T."/>
            <person name="Mizushima-Sugano J."/>
            <person name="Satoh T."/>
            <person name="Shirai Y."/>
            <person name="Takahashi Y."/>
            <person name="Nakagawa K."/>
            <person name="Okumura K."/>
            <person name="Nagase T."/>
            <person name="Nomura N."/>
            <person name="Kikuchi H."/>
            <person name="Masuho Y."/>
            <person name="Yamashita R."/>
            <person name="Nakai K."/>
            <person name="Yada T."/>
            <person name="Nakamura Y."/>
            <person name="Ohara O."/>
            <person name="Isogai T."/>
            <person name="Sugano S."/>
        </authorList>
    </citation>
    <scope>NUCLEOTIDE SEQUENCE [LARGE SCALE MRNA] (ISOFORMS 1 AND 3)</scope>
</reference>
<reference key="3">
    <citation type="journal article" date="2003" name="Nature">
        <title>The DNA sequence of human chromosome 7.</title>
        <authorList>
            <person name="Hillier L.W."/>
            <person name="Fulton R.S."/>
            <person name="Fulton L.A."/>
            <person name="Graves T.A."/>
            <person name="Pepin K.H."/>
            <person name="Wagner-McPherson C."/>
            <person name="Layman D."/>
            <person name="Maas J."/>
            <person name="Jaeger S."/>
            <person name="Walker R."/>
            <person name="Wylie K."/>
            <person name="Sekhon M."/>
            <person name="Becker M.C."/>
            <person name="O'Laughlin M.D."/>
            <person name="Schaller M.E."/>
            <person name="Fewell G.A."/>
            <person name="Delehaunty K.D."/>
            <person name="Miner T.L."/>
            <person name="Nash W.E."/>
            <person name="Cordes M."/>
            <person name="Du H."/>
            <person name="Sun H."/>
            <person name="Edwards J."/>
            <person name="Bradshaw-Cordum H."/>
            <person name="Ali J."/>
            <person name="Andrews S."/>
            <person name="Isak A."/>
            <person name="Vanbrunt A."/>
            <person name="Nguyen C."/>
            <person name="Du F."/>
            <person name="Lamar B."/>
            <person name="Courtney L."/>
            <person name="Kalicki J."/>
            <person name="Ozersky P."/>
            <person name="Bielicki L."/>
            <person name="Scott K."/>
            <person name="Holmes A."/>
            <person name="Harkins R."/>
            <person name="Harris A."/>
            <person name="Strong C.M."/>
            <person name="Hou S."/>
            <person name="Tomlinson C."/>
            <person name="Dauphin-Kohlberg S."/>
            <person name="Kozlowicz-Reilly A."/>
            <person name="Leonard S."/>
            <person name="Rohlfing T."/>
            <person name="Rock S.M."/>
            <person name="Tin-Wollam A.-M."/>
            <person name="Abbott A."/>
            <person name="Minx P."/>
            <person name="Maupin R."/>
            <person name="Strowmatt C."/>
            <person name="Latreille P."/>
            <person name="Miller N."/>
            <person name="Johnson D."/>
            <person name="Murray J."/>
            <person name="Woessner J.P."/>
            <person name="Wendl M.C."/>
            <person name="Yang S.-P."/>
            <person name="Schultz B.R."/>
            <person name="Wallis J.W."/>
            <person name="Spieth J."/>
            <person name="Bieri T.A."/>
            <person name="Nelson J.O."/>
            <person name="Berkowicz N."/>
            <person name="Wohldmann P.E."/>
            <person name="Cook L.L."/>
            <person name="Hickenbotham M.T."/>
            <person name="Eldred J."/>
            <person name="Williams D."/>
            <person name="Bedell J.A."/>
            <person name="Mardis E.R."/>
            <person name="Clifton S.W."/>
            <person name="Chissoe S.L."/>
            <person name="Marra M.A."/>
            <person name="Raymond C."/>
            <person name="Haugen E."/>
            <person name="Gillett W."/>
            <person name="Zhou Y."/>
            <person name="James R."/>
            <person name="Phelps K."/>
            <person name="Iadanoto S."/>
            <person name="Bubb K."/>
            <person name="Simms E."/>
            <person name="Levy R."/>
            <person name="Clendenning J."/>
            <person name="Kaul R."/>
            <person name="Kent W.J."/>
            <person name="Furey T.S."/>
            <person name="Baertsch R.A."/>
            <person name="Brent M.R."/>
            <person name="Keibler E."/>
            <person name="Flicek P."/>
            <person name="Bork P."/>
            <person name="Suyama M."/>
            <person name="Bailey J.A."/>
            <person name="Portnoy M.E."/>
            <person name="Torrents D."/>
            <person name="Chinwalla A.T."/>
            <person name="Gish W.R."/>
            <person name="Eddy S.R."/>
            <person name="McPherson J.D."/>
            <person name="Olson M.V."/>
            <person name="Eichler E.E."/>
            <person name="Green E.D."/>
            <person name="Waterston R.H."/>
            <person name="Wilson R.K."/>
        </authorList>
    </citation>
    <scope>NUCLEOTIDE SEQUENCE [LARGE SCALE GENOMIC DNA]</scope>
</reference>
<reference key="4">
    <citation type="journal article" date="2004" name="Genome Res.">
        <title>The status, quality, and expansion of the NIH full-length cDNA project: the Mammalian Gene Collection (MGC).</title>
        <authorList>
            <consortium name="The MGC Project Team"/>
        </authorList>
    </citation>
    <scope>NUCLEOTIDE SEQUENCE [LARGE SCALE MRNA] (ISOFORMS 1 AND 2)</scope>
    <source>
        <tissue>Brain</tissue>
        <tissue>Skin</tissue>
        <tissue>Uterus</tissue>
    </source>
</reference>
<reference key="5">
    <citation type="journal article" date="2008" name="Proc. Natl. Acad. Sci. U.S.A.">
        <title>A quantitative atlas of mitotic phosphorylation.</title>
        <authorList>
            <person name="Dephoure N."/>
            <person name="Zhou C."/>
            <person name="Villen J."/>
            <person name="Beausoleil S.A."/>
            <person name="Bakalarski C.E."/>
            <person name="Elledge S.J."/>
            <person name="Gygi S.P."/>
        </authorList>
    </citation>
    <scope>PHOSPHORYLATION [LARGE SCALE ANALYSIS] AT SER-18</scope>
    <scope>IDENTIFICATION BY MASS SPECTROMETRY [LARGE SCALE ANALYSIS]</scope>
    <source>
        <tissue>Cervix carcinoma</tissue>
    </source>
</reference>
<reference key="6">
    <citation type="journal article" date="2009" name="Science">
        <title>Jmjd6 catalyses lysyl-hydroxylation of U2AF65, a protein associated with RNA splicing.</title>
        <authorList>
            <person name="Webby C.J."/>
            <person name="Wolf A."/>
            <person name="Gromak N."/>
            <person name="Dreger M."/>
            <person name="Kramer H."/>
            <person name="Kessler B."/>
            <person name="Nielsen M.L."/>
            <person name="Schmitz C."/>
            <person name="Butler D.S."/>
            <person name="Yates J.R. III"/>
            <person name="Delahunty C.M."/>
            <person name="Hahn P."/>
            <person name="Lengeling A."/>
            <person name="Mann M."/>
            <person name="Proudfoot N.J."/>
            <person name="Schofield C.J."/>
            <person name="Boettger A."/>
        </authorList>
    </citation>
    <scope>HYDROXYLATION AT LYS-266 AND LYS-269</scope>
    <scope>MUTAGENESIS OF LYS-266 AND LYS-269</scope>
</reference>
<reference key="7">
    <citation type="journal article" date="2010" name="Sci. Signal.">
        <title>Quantitative phosphoproteomics reveals widespread full phosphorylation site occupancy during mitosis.</title>
        <authorList>
            <person name="Olsen J.V."/>
            <person name="Vermeulen M."/>
            <person name="Santamaria A."/>
            <person name="Kumar C."/>
            <person name="Miller M.L."/>
            <person name="Jensen L.J."/>
            <person name="Gnad F."/>
            <person name="Cox J."/>
            <person name="Jensen T.S."/>
            <person name="Nigg E.A."/>
            <person name="Brunak S."/>
            <person name="Mann M."/>
        </authorList>
    </citation>
    <scope>PHOSPHORYLATION [LARGE SCALE ANALYSIS] AT SER-18</scope>
    <scope>IDENTIFICATION BY MASS SPECTROMETRY [LARGE SCALE ANALYSIS]</scope>
    <source>
        <tissue>Cervix carcinoma</tissue>
    </source>
</reference>
<reference key="8">
    <citation type="journal article" date="2011" name="BMC Syst. Biol.">
        <title>Initial characterization of the human central proteome.</title>
        <authorList>
            <person name="Burkard T.R."/>
            <person name="Planyavsky M."/>
            <person name="Kaupe I."/>
            <person name="Breitwieser F.P."/>
            <person name="Buerckstuemmer T."/>
            <person name="Bennett K.L."/>
            <person name="Superti-Furga G."/>
            <person name="Colinge J."/>
        </authorList>
    </citation>
    <scope>IDENTIFICATION BY MASS SPECTROMETRY [LARGE SCALE ANALYSIS]</scope>
</reference>
<reference key="9">
    <citation type="journal article" date="2011" name="Sci. Signal.">
        <title>System-wide temporal characterization of the proteome and phosphoproteome of human embryonic stem cell differentiation.</title>
        <authorList>
            <person name="Rigbolt K.T."/>
            <person name="Prokhorova T.A."/>
            <person name="Akimov V."/>
            <person name="Henningsen J."/>
            <person name="Johansen P.T."/>
            <person name="Kratchmarova I."/>
            <person name="Kassem M."/>
            <person name="Mann M."/>
            <person name="Olsen J.V."/>
            <person name="Blagoev B."/>
        </authorList>
    </citation>
    <scope>PHOSPHORYLATION [LARGE SCALE ANALYSIS] AT SER-18</scope>
    <scope>IDENTIFICATION BY MASS SPECTROMETRY [LARGE SCALE ANALYSIS]</scope>
</reference>
<reference key="10">
    <citation type="journal article" date="2013" name="J. Proteome Res.">
        <title>Toward a comprehensive characterization of a human cancer cell phosphoproteome.</title>
        <authorList>
            <person name="Zhou H."/>
            <person name="Di Palma S."/>
            <person name="Preisinger C."/>
            <person name="Peng M."/>
            <person name="Polat A.N."/>
            <person name="Heck A.J."/>
            <person name="Mohammed S."/>
        </authorList>
    </citation>
    <scope>PHOSPHORYLATION [LARGE SCALE ANALYSIS] AT SER-18</scope>
    <scope>IDENTIFICATION BY MASS SPECTROMETRY [LARGE SCALE ANALYSIS]</scope>
    <source>
        <tissue>Cervix carcinoma</tissue>
        <tissue>Erythroleukemia</tissue>
    </source>
</reference>
<reference key="11">
    <citation type="journal article" date="2014" name="J. Proteomics">
        <title>An enzyme assisted RP-RPLC approach for in-depth analysis of human liver phosphoproteome.</title>
        <authorList>
            <person name="Bian Y."/>
            <person name="Song C."/>
            <person name="Cheng K."/>
            <person name="Dong M."/>
            <person name="Wang F."/>
            <person name="Huang J."/>
            <person name="Sun D."/>
            <person name="Wang L."/>
            <person name="Ye M."/>
            <person name="Zou H."/>
        </authorList>
    </citation>
    <scope>IDENTIFICATION BY MASS SPECTROMETRY [LARGE SCALE ANALYSIS]</scope>
    <source>
        <tissue>Liver</tissue>
    </source>
</reference>
<evidence type="ECO:0000250" key="1">
    <source>
        <dbReference type="UniProtKB" id="Q7TNC4"/>
    </source>
</evidence>
<evidence type="ECO:0000255" key="2"/>
<evidence type="ECO:0000256" key="3">
    <source>
        <dbReference type="SAM" id="MobiDB-lite"/>
    </source>
</evidence>
<evidence type="ECO:0000269" key="4">
    <source>
    </source>
</evidence>
<evidence type="ECO:0000303" key="5">
    <source>
    </source>
</evidence>
<evidence type="ECO:0000303" key="6">
    <source>
    </source>
</evidence>
<evidence type="ECO:0000305" key="7"/>
<evidence type="ECO:0007744" key="8">
    <source>
    </source>
</evidence>
<evidence type="ECO:0007744" key="9">
    <source>
    </source>
</evidence>
<evidence type="ECO:0007744" key="10">
    <source>
    </source>
</evidence>
<evidence type="ECO:0007744" key="11">
    <source>
    </source>
</evidence>
<sequence>MSAQAQMRAMLDQLMGTSRDGDTTRQRIKFSDDRVCKSHLLNCCPHDVLSGTRMDLGECLKVHDLALRADYEIASKEQDFFFELDAMDHLQSFIADCDRRTEVAKKRLAETQEEISAEVAAKAERVHELNEEIGKLLAKVEQLGAEGNVEESQKVMDEVEKARAKKREAEEVYRNSMPASSFQQQKLRVCEVCSAYLGLHDNDRRLADHFGGKLHLGFIEIREKLEELKRVVAEKQEKRNQERLKRREEREREEREKLRRSRSHSKNPKRSRSREHRRHRSRSMSRERKRRTRSKSREKRHRHRSRSSSRSRSRSHQRSRHSSRDRSRERSKRRSSKERFRDQDLASCDRDRSSRDRSPRDRDRKDKKRSYESANGRSEDRRSSEEREAGEI</sequence>
<keyword id="KW-0025">Alternative splicing</keyword>
<keyword id="KW-0175">Coiled coil</keyword>
<keyword id="KW-0379">Hydroxylation</keyword>
<keyword id="KW-0539">Nucleus</keyword>
<keyword id="KW-0597">Phosphoprotein</keyword>
<keyword id="KW-1267">Proteomics identification</keyword>
<keyword id="KW-1185">Reference proteome</keyword>
<comment type="function">
    <text>May bind to RNA via its Arg/Ser-rich domain.</text>
</comment>
<comment type="subunit">
    <text evidence="1">Interacts with SCNM1.</text>
</comment>
<comment type="interaction">
    <interactant intactId="EBI-352851">
        <id>Q9Y383</id>
    </interactant>
    <interactant intactId="EBI-743771">
        <id>Q92624</id>
        <label>APPBP2</label>
    </interactant>
    <organismsDiffer>false</organismsDiffer>
    <experiments>6</experiments>
</comment>
<comment type="interaction">
    <interactant intactId="EBI-352851">
        <id>Q9Y383</id>
    </interactant>
    <interactant intactId="EBI-998108">
        <id>Q86YF9</id>
        <label>DZIP1</label>
    </interactant>
    <organismsDiffer>false</organismsDiffer>
    <experiments>3</experiments>
</comment>
<comment type="interaction">
    <interactant intactId="EBI-352851">
        <id>Q9Y383</id>
    </interactant>
    <interactant intactId="EBI-466029">
        <id>P42858</id>
        <label>HTT</label>
    </interactant>
    <organismsDiffer>false</organismsDiffer>
    <experiments>9</experiments>
</comment>
<comment type="interaction">
    <interactant intactId="EBI-352851">
        <id>Q9Y383</id>
    </interactant>
    <interactant intactId="EBI-373144">
        <id>Q9GZQ8</id>
        <label>MAP1LC3B</label>
    </interactant>
    <organismsDiffer>false</organismsDiffer>
    <experiments>3</experiments>
</comment>
<comment type="interaction">
    <interactant intactId="EBI-352851">
        <id>Q9Y383</id>
    </interactant>
    <interactant intactId="EBI-16439278">
        <id>Q6FHY5</id>
        <label>MEOX2</label>
    </interactant>
    <organismsDiffer>false</organismsDiffer>
    <experiments>3</experiments>
</comment>
<comment type="interaction">
    <interactant intactId="EBI-352851">
        <id>Q9Y383</id>
    </interactant>
    <interactant intactId="EBI-389739">
        <id>P23511</id>
        <label>NFYA</label>
    </interactant>
    <organismsDiffer>false</organismsDiffer>
    <experiments>4</experiments>
</comment>
<comment type="interaction">
    <interactant intactId="EBI-352851">
        <id>Q9Y383</id>
    </interactant>
    <interactant intactId="EBI-11061759">
        <id>P23511-2</id>
        <label>NFYA</label>
    </interactant>
    <organismsDiffer>false</organismsDiffer>
    <experiments>3</experiments>
</comment>
<comment type="interaction">
    <interactant intactId="EBI-352851">
        <id>Q9Y383</id>
    </interactant>
    <interactant intactId="EBI-539478">
        <id>Q96SB4</id>
        <label>SRPK1</label>
    </interactant>
    <organismsDiffer>false</organismsDiffer>
    <experiments>4</experiments>
</comment>
<comment type="interaction">
    <interactant intactId="EBI-352851">
        <id>Q9Y383</id>
    </interactant>
    <interactant intactId="EBI-593303">
        <id>P78362</id>
        <label>SRPK2</label>
    </interactant>
    <organismsDiffer>false</organismsDiffer>
    <experiments>4</experiments>
</comment>
<comment type="interaction">
    <interactant intactId="EBI-352851">
        <id>Q9Y383</id>
    </interactant>
    <interactant intactId="EBI-3867173">
        <id>A7MD48</id>
        <label>SRRM4</label>
    </interactant>
    <organismsDiffer>false</organismsDiffer>
    <experiments>6</experiments>
</comment>
<comment type="interaction">
    <interactant intactId="EBI-352851">
        <id>Q9Y383</id>
    </interactant>
    <interactant intactId="EBI-745230">
        <id>Q13247</id>
        <label>SRSF6</label>
    </interactant>
    <organismsDiffer>false</organismsDiffer>
    <experiments>7</experiments>
</comment>
<comment type="interaction">
    <interactant intactId="EBI-352851">
        <id>Q9Y383</id>
    </interactant>
    <interactant intactId="EBI-398885">
        <id>Q16629</id>
        <label>SRSF7</label>
    </interactant>
    <organismsDiffer>false</organismsDiffer>
    <experiments>7</experiments>
</comment>
<comment type="interaction">
    <interactant intactId="EBI-352851">
        <id>Q9Y383</id>
    </interactant>
    <interactant intactId="EBI-6657923">
        <id>Q15696</id>
        <label>ZRSR2</label>
    </interactant>
    <organismsDiffer>false</organismsDiffer>
    <experiments>3</experiments>
</comment>
<comment type="subcellular location">
    <subcellularLocation>
        <location evidence="1">Nucleus speckle</location>
    </subcellularLocation>
    <subcellularLocation>
        <location evidence="1">Nucleus</location>
        <location evidence="1">Nucleoplasm</location>
    </subcellularLocation>
    <text evidence="1">Colocalizes with SCNM1 and SNRNP70 in nuclear speckles.</text>
</comment>
<comment type="alternative products">
    <event type="alternative splicing"/>
    <isoform>
        <id>Q9Y383-1</id>
        <name>1</name>
        <sequence type="displayed"/>
    </isoform>
    <isoform>
        <id>Q9Y383-2</id>
        <name>2</name>
        <sequence type="described" ref="VSP_010217"/>
    </isoform>
    <isoform>
        <id>Q9Y383-3</id>
        <name>3</name>
        <sequence type="described" ref="VSP_044896"/>
    </isoform>
</comment>
<comment type="similarity">
    <text evidence="7">Belongs to the Luc7 family.</text>
</comment>
<comment type="sequence caution" evidence="7">
    <conflict type="frameshift">
        <sequence resource="EMBL-CDS" id="AAD34069"/>
    </conflict>
</comment>
<organism>
    <name type="scientific">Homo sapiens</name>
    <name type="common">Human</name>
    <dbReference type="NCBI Taxonomy" id="9606"/>
    <lineage>
        <taxon>Eukaryota</taxon>
        <taxon>Metazoa</taxon>
        <taxon>Chordata</taxon>
        <taxon>Craniata</taxon>
        <taxon>Vertebrata</taxon>
        <taxon>Euteleostomi</taxon>
        <taxon>Mammalia</taxon>
        <taxon>Eutheria</taxon>
        <taxon>Euarchontoglires</taxon>
        <taxon>Primates</taxon>
        <taxon>Haplorrhini</taxon>
        <taxon>Catarrhini</taxon>
        <taxon>Hominidae</taxon>
        <taxon>Homo</taxon>
    </lineage>
</organism>